<gene>
    <name type="primary">SNURF</name>
</gene>
<accession>Q9Y675</accession>
<accession>A6NCW2</accession>
<sequence length="71" mass="8412">MERARDRLHLRRTTEQHVPEVEVQVKRRRTASLSNQECQLYPRRSQQQQVPVVDFQAELRQAFLAETPRGG</sequence>
<protein>
    <recommendedName>
        <fullName>SNRPN upstream reading frame protein</fullName>
    </recommendedName>
</protein>
<keyword id="KW-0539">Nucleus</keyword>
<keyword id="KW-1267">Proteomics identification</keyword>
<keyword id="KW-1185">Reference proteome</keyword>
<feature type="chain" id="PRO_0000312993" description="SNRPN upstream reading frame protein">
    <location>
        <begin position="1"/>
        <end position="71"/>
    </location>
</feature>
<evidence type="ECO:0000269" key="1">
    <source>
    </source>
</evidence>
<evidence type="ECO:0000305" key="2"/>
<name>SNURF_HUMAN</name>
<proteinExistence type="evidence at protein level"/>
<comment type="subcellular location">
    <subcellularLocation>
        <location evidence="1">Nucleus</location>
    </subcellularLocation>
</comment>
<comment type="tissue specificity">
    <text evidence="1">Expressed in heart, skeletal muscle and lymphoblasts (at protein level). Expressed in brain, pancreas, heart, liver, lung, kidney and skeletal muscle.</text>
</comment>
<comment type="miscellaneous">
    <text>Encoded on a bicistronic transcript that code for two proteins, SNRPN and SNURF. In addition to the primary 1.6-kb bicistronic SNURF-SNRPN transcript, SNURF-only transcript is also detected.</text>
</comment>
<comment type="similarity">
    <text evidence="2">Belongs to the SNURF family.</text>
</comment>
<organism>
    <name type="scientific">Homo sapiens</name>
    <name type="common">Human</name>
    <dbReference type="NCBI Taxonomy" id="9606"/>
    <lineage>
        <taxon>Eukaryota</taxon>
        <taxon>Metazoa</taxon>
        <taxon>Chordata</taxon>
        <taxon>Craniata</taxon>
        <taxon>Vertebrata</taxon>
        <taxon>Euteleostomi</taxon>
        <taxon>Mammalia</taxon>
        <taxon>Eutheria</taxon>
        <taxon>Euarchontoglires</taxon>
        <taxon>Primates</taxon>
        <taxon>Haplorrhini</taxon>
        <taxon>Catarrhini</taxon>
        <taxon>Hominidae</taxon>
        <taxon>Homo</taxon>
    </lineage>
</organism>
<dbReference type="EMBL" id="AF101044">
    <property type="protein sequence ID" value="AAD31391.1"/>
    <property type="molecule type" value="mRNA"/>
</dbReference>
<dbReference type="EMBL" id="AC124312">
    <property type="status" value="NOT_ANNOTATED_CDS"/>
    <property type="molecule type" value="Genomic_DNA"/>
</dbReference>
<dbReference type="EMBL" id="CH471151">
    <property type="protein sequence ID" value="EAW57625.1"/>
    <property type="molecule type" value="Genomic_DNA"/>
</dbReference>
<dbReference type="CCDS" id="CCDS10016.1"/>
<dbReference type="RefSeq" id="NP_001381263.1">
    <property type="nucleotide sequence ID" value="NM_001394334.1"/>
</dbReference>
<dbReference type="RefSeq" id="NP_005669.2">
    <property type="nucleotide sequence ID" value="NM_005678.4"/>
</dbReference>
<dbReference type="RefSeq" id="NP_073715.1">
    <property type="nucleotide sequence ID" value="NM_022804.3"/>
</dbReference>
<dbReference type="BioGRID" id="114440">
    <property type="interactions" value="6"/>
</dbReference>
<dbReference type="FunCoup" id="Q9Y675">
    <property type="interactions" value="575"/>
</dbReference>
<dbReference type="IntAct" id="Q9Y675">
    <property type="interactions" value="10"/>
</dbReference>
<dbReference type="MINT" id="Q9Y675"/>
<dbReference type="STRING" id="9606.ENSP00000463201"/>
<dbReference type="iPTMnet" id="Q9Y675"/>
<dbReference type="PhosphoSitePlus" id="Q9Y675"/>
<dbReference type="BioMuta" id="SNURF"/>
<dbReference type="DMDM" id="74721518"/>
<dbReference type="MassIVE" id="Q9Y675"/>
<dbReference type="PaxDb" id="9606-ENSP00000463201"/>
<dbReference type="PeptideAtlas" id="Q9Y675"/>
<dbReference type="ProteomicsDB" id="86613"/>
<dbReference type="Antibodypedia" id="70474">
    <property type="antibodies" value="20 antibodies from 9 providers"/>
</dbReference>
<dbReference type="DNASU" id="8926"/>
<dbReference type="Ensembl" id="ENST00000338327.4">
    <property type="protein sequence ID" value="ENSP00000342152.4"/>
    <property type="gene ID" value="ENSG00000273173.6"/>
</dbReference>
<dbReference type="Ensembl" id="ENST00000577949.6">
    <property type="protein sequence ID" value="ENSP00000463201.1"/>
    <property type="gene ID" value="ENSG00000273173.6"/>
</dbReference>
<dbReference type="Ensembl" id="ENST00000580062.5">
    <property type="protein sequence ID" value="ENSP00000463396.1"/>
    <property type="gene ID" value="ENSG00000273173.6"/>
</dbReference>
<dbReference type="GeneID" id="8926"/>
<dbReference type="KEGG" id="hsa:8926"/>
<dbReference type="MANE-Select" id="ENST00000577949.6">
    <property type="protein sequence ID" value="ENSP00000463201.1"/>
    <property type="RefSeq nucleotide sequence ID" value="NM_001394334.1"/>
    <property type="RefSeq protein sequence ID" value="NP_001381263.1"/>
</dbReference>
<dbReference type="UCSC" id="uc001ywu.4">
    <property type="organism name" value="human"/>
</dbReference>
<dbReference type="AGR" id="HGNC:11171"/>
<dbReference type="CTD" id="8926"/>
<dbReference type="DisGeNET" id="8926"/>
<dbReference type="GeneCards" id="SNURF"/>
<dbReference type="HGNC" id="HGNC:11171">
    <property type="gene designation" value="SNURF"/>
</dbReference>
<dbReference type="HPA" id="ENSG00000273173">
    <property type="expression patterns" value="Tissue enhanced (brain)"/>
</dbReference>
<dbReference type="neXtProt" id="NX_Q9Y675"/>
<dbReference type="OpenTargets" id="ENSG00000273173"/>
<dbReference type="PharmGKB" id="PA36010"/>
<dbReference type="VEuPathDB" id="HostDB:ENSG00000273173"/>
<dbReference type="eggNOG" id="ENOG502T5G1">
    <property type="taxonomic scope" value="Eukaryota"/>
</dbReference>
<dbReference type="GeneTree" id="ENSGT00390000009320"/>
<dbReference type="HOGENOM" id="CLU_165583_0_0_1"/>
<dbReference type="InParanoid" id="Q9Y675"/>
<dbReference type="OMA" id="QVKHRIA"/>
<dbReference type="OrthoDB" id="9727301at2759"/>
<dbReference type="PAN-GO" id="Q9Y675">
    <property type="GO annotations" value="1 GO annotation based on evolutionary models"/>
</dbReference>
<dbReference type="PhylomeDB" id="Q9Y675"/>
<dbReference type="TreeFam" id="TF338383"/>
<dbReference type="PathwayCommons" id="Q9Y675"/>
<dbReference type="SignaLink" id="Q9Y675"/>
<dbReference type="BioGRID-ORCS" id="8926">
    <property type="hits" value="5 hits in 1127 CRISPR screens"/>
</dbReference>
<dbReference type="GeneWiki" id="SNRPN_upstream_reading_frame_protein"/>
<dbReference type="GenomeRNAi" id="8926"/>
<dbReference type="Pharos" id="Q9Y675">
    <property type="development level" value="Tdark"/>
</dbReference>
<dbReference type="PRO" id="PR:Q9Y675"/>
<dbReference type="Proteomes" id="UP000005640">
    <property type="component" value="Chromosome 15"/>
</dbReference>
<dbReference type="RNAct" id="Q9Y675">
    <property type="molecule type" value="protein"/>
</dbReference>
<dbReference type="Bgee" id="ENSG00000273173">
    <property type="expression patterns" value="Expressed in cortical plate and 106 other cell types or tissues"/>
</dbReference>
<dbReference type="ExpressionAtlas" id="Q9Y675">
    <property type="expression patterns" value="baseline and differential"/>
</dbReference>
<dbReference type="GO" id="GO:0016607">
    <property type="term" value="C:nuclear speck"/>
    <property type="evidence" value="ECO:0000314"/>
    <property type="project" value="HPA"/>
</dbReference>
<dbReference type="GO" id="GO:0005634">
    <property type="term" value="C:nucleus"/>
    <property type="evidence" value="ECO:0000303"/>
    <property type="project" value="UniProtKB"/>
</dbReference>
<dbReference type="GO" id="GO:0051117">
    <property type="term" value="F:ATPase binding"/>
    <property type="evidence" value="ECO:0007669"/>
    <property type="project" value="Ensembl"/>
</dbReference>
<dbReference type="InterPro" id="IPR009847">
    <property type="entry name" value="SNURF"/>
</dbReference>
<dbReference type="PANTHER" id="PTHR14508">
    <property type="entry name" value="SNRPN UPSTREAM READING FRAME PROTEIN, SNURF"/>
    <property type="match status" value="1"/>
</dbReference>
<dbReference type="PANTHER" id="PTHR14508:SF2">
    <property type="entry name" value="SNRPN UPSTREAM READING FRAME PROTEIN-RELATED"/>
    <property type="match status" value="1"/>
</dbReference>
<dbReference type="Pfam" id="PF07192">
    <property type="entry name" value="SNURF"/>
    <property type="match status" value="1"/>
</dbReference>
<reference key="1">
    <citation type="journal article" date="1999" name="Proc. Natl. Acad. Sci. U.S.A.">
        <title>An imprinted, mammalian bicistronic transcript encodes two independent proteins.</title>
        <authorList>
            <person name="Gray T.A."/>
            <person name="Saitoh S."/>
            <person name="Nicholls R.D."/>
        </authorList>
    </citation>
    <scope>NUCLEOTIDE SEQUENCE [MRNA]</scope>
    <scope>SUBCELLULAR LOCATION</scope>
    <scope>TISSUE SPECIFICITY</scope>
</reference>
<reference key="2">
    <citation type="journal article" date="2006" name="Nature">
        <title>Analysis of the DNA sequence and duplication history of human chromosome 15.</title>
        <authorList>
            <person name="Zody M.C."/>
            <person name="Garber M."/>
            <person name="Sharpe T."/>
            <person name="Young S.K."/>
            <person name="Rowen L."/>
            <person name="O'Neill K."/>
            <person name="Whittaker C.A."/>
            <person name="Kamal M."/>
            <person name="Chang J.L."/>
            <person name="Cuomo C.A."/>
            <person name="Dewar K."/>
            <person name="FitzGerald M.G."/>
            <person name="Kodira C.D."/>
            <person name="Madan A."/>
            <person name="Qin S."/>
            <person name="Yang X."/>
            <person name="Abbasi N."/>
            <person name="Abouelleil A."/>
            <person name="Arachchi H.M."/>
            <person name="Baradarani L."/>
            <person name="Birditt B."/>
            <person name="Bloom S."/>
            <person name="Bloom T."/>
            <person name="Borowsky M.L."/>
            <person name="Burke J."/>
            <person name="Butler J."/>
            <person name="Cook A."/>
            <person name="DeArellano K."/>
            <person name="DeCaprio D."/>
            <person name="Dorris L. III"/>
            <person name="Dors M."/>
            <person name="Eichler E.E."/>
            <person name="Engels R."/>
            <person name="Fahey J."/>
            <person name="Fleetwood P."/>
            <person name="Friedman C."/>
            <person name="Gearin G."/>
            <person name="Hall J.L."/>
            <person name="Hensley G."/>
            <person name="Johnson E."/>
            <person name="Jones C."/>
            <person name="Kamat A."/>
            <person name="Kaur A."/>
            <person name="Locke D.P."/>
            <person name="Madan A."/>
            <person name="Munson G."/>
            <person name="Jaffe D.B."/>
            <person name="Lui A."/>
            <person name="Macdonald P."/>
            <person name="Mauceli E."/>
            <person name="Naylor J.W."/>
            <person name="Nesbitt R."/>
            <person name="Nicol R."/>
            <person name="O'Leary S.B."/>
            <person name="Ratcliffe A."/>
            <person name="Rounsley S."/>
            <person name="She X."/>
            <person name="Sneddon K.M.B."/>
            <person name="Stewart S."/>
            <person name="Sougnez C."/>
            <person name="Stone S.M."/>
            <person name="Topham K."/>
            <person name="Vincent D."/>
            <person name="Wang S."/>
            <person name="Zimmer A.R."/>
            <person name="Birren B.W."/>
            <person name="Hood L."/>
            <person name="Lander E.S."/>
            <person name="Nusbaum C."/>
        </authorList>
    </citation>
    <scope>NUCLEOTIDE SEQUENCE [LARGE SCALE GENOMIC DNA]</scope>
</reference>
<reference key="3">
    <citation type="submission" date="2005-07" db="EMBL/GenBank/DDBJ databases">
        <authorList>
            <person name="Mural R.J."/>
            <person name="Istrail S."/>
            <person name="Sutton G.G."/>
            <person name="Florea L."/>
            <person name="Halpern A.L."/>
            <person name="Mobarry C.M."/>
            <person name="Lippert R."/>
            <person name="Walenz B."/>
            <person name="Shatkay H."/>
            <person name="Dew I."/>
            <person name="Miller J.R."/>
            <person name="Flanigan M.J."/>
            <person name="Edwards N.J."/>
            <person name="Bolanos R."/>
            <person name="Fasulo D."/>
            <person name="Halldorsson B.V."/>
            <person name="Hannenhalli S."/>
            <person name="Turner R."/>
            <person name="Yooseph S."/>
            <person name="Lu F."/>
            <person name="Nusskern D.R."/>
            <person name="Shue B.C."/>
            <person name="Zheng X.H."/>
            <person name="Zhong F."/>
            <person name="Delcher A.L."/>
            <person name="Huson D.H."/>
            <person name="Kravitz S.A."/>
            <person name="Mouchard L."/>
            <person name="Reinert K."/>
            <person name="Remington K.A."/>
            <person name="Clark A.G."/>
            <person name="Waterman M.S."/>
            <person name="Eichler E.E."/>
            <person name="Adams M.D."/>
            <person name="Hunkapiller M.W."/>
            <person name="Myers E.W."/>
            <person name="Venter J.C."/>
        </authorList>
    </citation>
    <scope>NUCLEOTIDE SEQUENCE [LARGE SCALE GENOMIC DNA]</scope>
</reference>